<organism>
    <name type="scientific">Mus musculus</name>
    <name type="common">Mouse</name>
    <dbReference type="NCBI Taxonomy" id="10090"/>
    <lineage>
        <taxon>Eukaryota</taxon>
        <taxon>Metazoa</taxon>
        <taxon>Chordata</taxon>
        <taxon>Craniata</taxon>
        <taxon>Vertebrata</taxon>
        <taxon>Euteleostomi</taxon>
        <taxon>Mammalia</taxon>
        <taxon>Eutheria</taxon>
        <taxon>Euarchontoglires</taxon>
        <taxon>Glires</taxon>
        <taxon>Rodentia</taxon>
        <taxon>Myomorpha</taxon>
        <taxon>Muroidea</taxon>
        <taxon>Muridae</taxon>
        <taxon>Murinae</taxon>
        <taxon>Mus</taxon>
        <taxon>Mus</taxon>
    </lineage>
</organism>
<protein>
    <recommendedName>
        <fullName evidence="1">Palmitoleoyl-protein carboxylesterase NOTUM</fullName>
        <ecNumber evidence="1">3.1.1.98</ecNumber>
    </recommendedName>
</protein>
<sequence length="503" mass="56584">MGGEVRVLLLLGLLHWVGGSEGRKTWRRRGQQPPQPPPPPPLPQRAEVEPGAGQPVESFPLDFTAVEGNMDSFMAQVKSLAQSLYPCSAQQLNEDLRLHLLLNTSVTCNDGSPAGYYLKESKGSRRWLLFLEGGWYCFNRENCDSRYSTMRRLMSSKDWPHTRTGTGILSSQPEENPHWWNANMVFIPYCSSDVWSGASPKSDKNEYAFMGSLIIQEVVRELLGKGLSGAKVLLLAGSSAGGTGVLLNVDRVAELLEELGYPSIQVRGLADSGWFLDNKQYRRSDCIDTINCAPTDAIRRGIRYWSGMVPERCQRQFKEGEEWNCFFGYKVYPTLRCPVFVVQWLFDEAQLTVDNVHLTGQPVQEGQWLYIQNLGRELRGTLKDVQASFAPACLSHEIIIRSYWTDVQVKGTSLPRALHCWDRSFHDSHKASKTPMKGCPFHLVDSCPWPHCNPSCPTIRDQFTGQEMNVAQFLMHMGFDVQTVAQQQGMEPSKLLGMLSNGN</sequence>
<dbReference type="EC" id="3.1.1.98" evidence="1"/>
<dbReference type="EMBL" id="AL663030">
    <property type="status" value="NOT_ANNOTATED_CDS"/>
    <property type="molecule type" value="Genomic_DNA"/>
</dbReference>
<dbReference type="EMBL" id="BC025832">
    <property type="protein sequence ID" value="AAH25832.1"/>
    <property type="molecule type" value="mRNA"/>
</dbReference>
<dbReference type="CCDS" id="CCDS49007.1">
    <molecule id="Q8R116-1"/>
</dbReference>
<dbReference type="RefSeq" id="NP_001369198.1">
    <molecule id="Q8R116-1"/>
    <property type="nucleotide sequence ID" value="NM_001382269.1"/>
</dbReference>
<dbReference type="RefSeq" id="NP_001402705.1">
    <molecule id="Q8R116-1"/>
    <property type="nucleotide sequence ID" value="NM_001415776.1"/>
</dbReference>
<dbReference type="RefSeq" id="NP_780472.3">
    <molecule id="Q8R116-1"/>
    <property type="nucleotide sequence ID" value="NM_175263.4"/>
</dbReference>
<dbReference type="RefSeq" id="XP_011247616.1">
    <property type="nucleotide sequence ID" value="XM_011249314.2"/>
</dbReference>
<dbReference type="SMR" id="Q8R116"/>
<dbReference type="FunCoup" id="Q8R116">
    <property type="interactions" value="158"/>
</dbReference>
<dbReference type="STRING" id="10090.ENSMUSP00000101783"/>
<dbReference type="BindingDB" id="Q8R116"/>
<dbReference type="ChEMBL" id="CHEMBL3758064"/>
<dbReference type="ESTHER" id="mouse-notum">
    <property type="family name" value="Pectinacetylesterase-Notum"/>
</dbReference>
<dbReference type="GlyCosmos" id="Q8R116">
    <property type="glycosylation" value="1 site, No reported glycans"/>
</dbReference>
<dbReference type="GlyGen" id="Q8R116">
    <property type="glycosylation" value="1 site, 1 N-linked glycan (1 site)"/>
</dbReference>
<dbReference type="PhosphoSitePlus" id="Q8R116"/>
<dbReference type="PaxDb" id="10090-ENSMUSP00000101784"/>
<dbReference type="Antibodypedia" id="19856">
    <property type="antibodies" value="177 antibodies from 29 providers"/>
</dbReference>
<dbReference type="DNASU" id="77583"/>
<dbReference type="Ensembl" id="ENSMUST00000106177.8">
    <molecule id="Q8R116-1"/>
    <property type="protein sequence ID" value="ENSMUSP00000101783.2"/>
    <property type="gene ID" value="ENSMUSG00000042988.11"/>
</dbReference>
<dbReference type="Ensembl" id="ENSMUST00000106178.9">
    <molecule id="Q8R116-1"/>
    <property type="protein sequence ID" value="ENSMUSP00000101784.3"/>
    <property type="gene ID" value="ENSMUSG00000042988.11"/>
</dbReference>
<dbReference type="GeneID" id="77583"/>
<dbReference type="KEGG" id="mmu:77583"/>
<dbReference type="UCSC" id="uc007mty.2">
    <molecule id="Q8R116-2"/>
    <property type="organism name" value="mouse"/>
</dbReference>
<dbReference type="UCSC" id="uc007mtz.2">
    <molecule id="Q8R116-1"/>
    <property type="organism name" value="mouse"/>
</dbReference>
<dbReference type="AGR" id="MGI:1924833"/>
<dbReference type="CTD" id="147111"/>
<dbReference type="MGI" id="MGI:1924833">
    <property type="gene designation" value="Notum"/>
</dbReference>
<dbReference type="VEuPathDB" id="HostDB:ENSMUSG00000042988"/>
<dbReference type="eggNOG" id="KOG4287">
    <property type="taxonomic scope" value="Eukaryota"/>
</dbReference>
<dbReference type="GeneTree" id="ENSGT00390000015892"/>
<dbReference type="HOGENOM" id="CLU_026533_1_1_1"/>
<dbReference type="InParanoid" id="Q8R116"/>
<dbReference type="OMA" id="SKRDWVN"/>
<dbReference type="OrthoDB" id="2015280at2759"/>
<dbReference type="PhylomeDB" id="Q8R116"/>
<dbReference type="TreeFam" id="TF324830"/>
<dbReference type="Reactome" id="R-MMU-381426">
    <property type="pathway name" value="Regulation of Insulin-like Growth Factor (IGF) transport and uptake by Insulin-like Growth Factor Binding Proteins (IGFBPs)"/>
</dbReference>
<dbReference type="Reactome" id="R-MMU-5362798">
    <property type="pathway name" value="Release of Hh-Np from the secreting cell"/>
</dbReference>
<dbReference type="Reactome" id="R-MMU-8957275">
    <property type="pathway name" value="Post-translational protein phosphorylation"/>
</dbReference>
<dbReference type="BioGRID-ORCS" id="77583">
    <property type="hits" value="0 hits in 79 CRISPR screens"/>
</dbReference>
<dbReference type="PRO" id="PR:Q8R116"/>
<dbReference type="Proteomes" id="UP000000589">
    <property type="component" value="Chromosome 11"/>
</dbReference>
<dbReference type="RNAct" id="Q8R116">
    <property type="molecule type" value="protein"/>
</dbReference>
<dbReference type="Bgee" id="ENSMUSG00000042988">
    <property type="expression patterns" value="Expressed in gastrula and 92 other cell types or tissues"/>
</dbReference>
<dbReference type="ExpressionAtlas" id="Q8R116">
    <property type="expression patterns" value="baseline and differential"/>
</dbReference>
<dbReference type="GO" id="GO:0005576">
    <property type="term" value="C:extracellular region"/>
    <property type="evidence" value="ECO:0007669"/>
    <property type="project" value="UniProtKB-SubCell"/>
</dbReference>
<dbReference type="GO" id="GO:0016298">
    <property type="term" value="F:lipase activity"/>
    <property type="evidence" value="ECO:0000314"/>
    <property type="project" value="MGI"/>
</dbReference>
<dbReference type="GO" id="GO:1990699">
    <property type="term" value="F:palmitoleyl hydrolase activity"/>
    <property type="evidence" value="ECO:0000314"/>
    <property type="project" value="UniProtKB"/>
</dbReference>
<dbReference type="GO" id="GO:0140776">
    <property type="term" value="F:protein-containing complex destabilizing activity"/>
    <property type="evidence" value="ECO:0000314"/>
    <property type="project" value="UniProtKB"/>
</dbReference>
<dbReference type="GO" id="GO:0060348">
    <property type="term" value="P:bone development"/>
    <property type="evidence" value="ECO:0000315"/>
    <property type="project" value="MGI"/>
</dbReference>
<dbReference type="GO" id="GO:0090090">
    <property type="term" value="P:negative regulation of canonical Wnt signaling pathway"/>
    <property type="evidence" value="ECO:0000314"/>
    <property type="project" value="MGI"/>
</dbReference>
<dbReference type="GO" id="GO:0030178">
    <property type="term" value="P:negative regulation of Wnt signaling pathway"/>
    <property type="evidence" value="ECO:0000314"/>
    <property type="project" value="UniProtKB"/>
</dbReference>
<dbReference type="GO" id="GO:1990697">
    <property type="term" value="P:protein depalmitoleylation"/>
    <property type="evidence" value="ECO:0000250"/>
    <property type="project" value="UniProtKB"/>
</dbReference>
<dbReference type="GO" id="GO:0030500">
    <property type="term" value="P:regulation of bone mineralization"/>
    <property type="evidence" value="ECO:0000314"/>
    <property type="project" value="MGI"/>
</dbReference>
<dbReference type="GO" id="GO:0016055">
    <property type="term" value="P:Wnt signaling pathway"/>
    <property type="evidence" value="ECO:0007669"/>
    <property type="project" value="UniProtKB-KW"/>
</dbReference>
<dbReference type="InterPro" id="IPR004963">
    <property type="entry name" value="PAE/NOTUM"/>
</dbReference>
<dbReference type="PANTHER" id="PTHR21562">
    <property type="entry name" value="NOTUM-RELATED"/>
    <property type="match status" value="1"/>
</dbReference>
<dbReference type="PANTHER" id="PTHR21562:SF7">
    <property type="entry name" value="PALMITOLEOYL-PROTEIN CARBOXYLESTERASE NOTUM"/>
    <property type="match status" value="1"/>
</dbReference>
<dbReference type="Pfam" id="PF03283">
    <property type="entry name" value="PAE"/>
    <property type="match status" value="1"/>
</dbReference>
<reference key="1">
    <citation type="journal article" date="2009" name="PLoS Biol.">
        <title>Lineage-specific biology revealed by a finished genome assembly of the mouse.</title>
        <authorList>
            <person name="Church D.M."/>
            <person name="Goodstadt L."/>
            <person name="Hillier L.W."/>
            <person name="Zody M.C."/>
            <person name="Goldstein S."/>
            <person name="She X."/>
            <person name="Bult C.J."/>
            <person name="Agarwala R."/>
            <person name="Cherry J.L."/>
            <person name="DiCuccio M."/>
            <person name="Hlavina W."/>
            <person name="Kapustin Y."/>
            <person name="Meric P."/>
            <person name="Maglott D."/>
            <person name="Birtle Z."/>
            <person name="Marques A.C."/>
            <person name="Graves T."/>
            <person name="Zhou S."/>
            <person name="Teague B."/>
            <person name="Potamousis K."/>
            <person name="Churas C."/>
            <person name="Place M."/>
            <person name="Herschleb J."/>
            <person name="Runnheim R."/>
            <person name="Forrest D."/>
            <person name="Amos-Landgraf J."/>
            <person name="Schwartz D.C."/>
            <person name="Cheng Z."/>
            <person name="Lindblad-Toh K."/>
            <person name="Eichler E.E."/>
            <person name="Ponting C.P."/>
        </authorList>
    </citation>
    <scope>NUCLEOTIDE SEQUENCE [LARGE SCALE GENOMIC DNA]</scope>
    <source>
        <strain>C57BL/6J</strain>
    </source>
</reference>
<reference key="2">
    <citation type="journal article" date="2004" name="Genome Res.">
        <title>The status, quality, and expansion of the NIH full-length cDNA project: the Mammalian Gene Collection (MGC).</title>
        <authorList>
            <consortium name="The MGC Project Team"/>
        </authorList>
    </citation>
    <scope>NUCLEOTIDE SEQUENCE [LARGE SCALE MRNA] (ISOFORM 2)</scope>
    <source>
        <strain>FVB/N</strain>
        <tissue>Liver</tissue>
    </source>
</reference>
<reference key="3">
    <citation type="journal article" date="2008" name="Biochem. J.">
        <title>Mammalian Notum induces the release of glypicans and other GPI-anchored proteins from the cell surface.</title>
        <authorList>
            <person name="Traister A."/>
            <person name="Shi W."/>
            <person name="Filmus J."/>
        </authorList>
    </citation>
    <scope>PRELIMINARY FUNCTION</scope>
    <scope>TISSUE SPECIFICITY</scope>
</reference>
<reference key="4">
    <citation type="journal article" date="2015" name="Dev. Cell">
        <title>Notum is required for neural and head induction via Wnt deacylation, oxidation, and inactivation.</title>
        <authorList>
            <person name="Zhang X."/>
            <person name="Cheong S.M."/>
            <person name="Amado N.G."/>
            <person name="Reis A.H."/>
            <person name="MacDonald B.T."/>
            <person name="Zebisch M."/>
            <person name="Jones E.Y."/>
            <person name="Abreu J.G."/>
            <person name="He X."/>
        </authorList>
    </citation>
    <scope>FUNCTION</scope>
    <scope>MUTAGENESIS OF SER-239</scope>
</reference>
<proteinExistence type="evidence at protein level"/>
<gene>
    <name evidence="10" type="primary">Notum</name>
</gene>
<keyword id="KW-0025">Alternative splicing</keyword>
<keyword id="KW-0325">Glycoprotein</keyword>
<keyword id="KW-0378">Hydrolase</keyword>
<keyword id="KW-0597">Phosphoprotein</keyword>
<keyword id="KW-1185">Reference proteome</keyword>
<keyword id="KW-0964">Secreted</keyword>
<keyword id="KW-0719">Serine esterase</keyword>
<keyword id="KW-0732">Signal</keyword>
<keyword id="KW-0879">Wnt signaling pathway</keyword>
<feature type="signal peptide" evidence="3">
    <location>
        <begin position="1"/>
        <end position="19"/>
    </location>
</feature>
<feature type="chain" id="PRO_0000318756" description="Palmitoleoyl-protein carboxylesterase NOTUM">
    <location>
        <begin position="20"/>
        <end position="503"/>
    </location>
</feature>
<feature type="region of interest" description="Disordered" evidence="4">
    <location>
        <begin position="23"/>
        <end position="53"/>
    </location>
</feature>
<feature type="compositionally biased region" description="Pro residues" evidence="4">
    <location>
        <begin position="33"/>
        <end position="43"/>
    </location>
</feature>
<feature type="active site" description="Charge relay system" evidence="9">
    <location>
        <position position="239"/>
    </location>
</feature>
<feature type="active site" description="Charge relay system" evidence="1">
    <location>
        <position position="347"/>
    </location>
</feature>
<feature type="active site" description="Charge relay system" evidence="1">
    <location>
        <position position="396"/>
    </location>
</feature>
<feature type="modified residue" description="Phosphoserine" evidence="1">
    <location>
        <position position="88"/>
    </location>
</feature>
<feature type="glycosylation site" description="N-linked (GlcNAc...) asparagine" evidence="3">
    <location>
        <position position="103"/>
    </location>
</feature>
<feature type="splice variant" id="VSP_031295" description="In isoform 2." evidence="7">
    <location>
        <begin position="1"/>
        <end position="175"/>
    </location>
</feature>
<feature type="splice variant" id="VSP_031296" description="In isoform 2." evidence="7">
    <original>NPHWWNANMV</original>
    <variation>MVGSPDPCYS</variation>
    <location>
        <begin position="176"/>
        <end position="185"/>
    </location>
</feature>
<feature type="mutagenesis site" description="Abolishes enzyme activity. Unable to mediate serine depalmitoleoylation of WNT proteins." evidence="6">
    <original>S</original>
    <variation>A</variation>
    <location>
        <position position="239"/>
    </location>
</feature>
<feature type="sequence conflict" description="In Ref. 2; AAH25832." evidence="8" ref="2">
    <original>T</original>
    <variation>M</variation>
    <location>
        <position position="483"/>
    </location>
</feature>
<evidence type="ECO:0000250" key="1">
    <source>
        <dbReference type="UniProtKB" id="Q6P988"/>
    </source>
</evidence>
<evidence type="ECO:0000250" key="2">
    <source>
        <dbReference type="UniProtKB" id="Q9VUX3"/>
    </source>
</evidence>
<evidence type="ECO:0000255" key="3"/>
<evidence type="ECO:0000256" key="4">
    <source>
        <dbReference type="SAM" id="MobiDB-lite"/>
    </source>
</evidence>
<evidence type="ECO:0000269" key="5">
    <source>
    </source>
</evidence>
<evidence type="ECO:0000269" key="6">
    <source>
    </source>
</evidence>
<evidence type="ECO:0000303" key="7">
    <source>
    </source>
</evidence>
<evidence type="ECO:0000305" key="8"/>
<evidence type="ECO:0000305" key="9">
    <source>
    </source>
</evidence>
<evidence type="ECO:0000312" key="10">
    <source>
        <dbReference type="MGI" id="MGI:1924833"/>
    </source>
</evidence>
<accession>Q8R116</accession>
<accession>A2ABZ5</accession>
<accession>A2ABZ6</accession>
<comment type="function">
    <text evidence="6">Carboxylesterase that acts as a key negative regulator of the Wnt signaling pathway by specifically mediating depalmitoleoylation of WNT proteins. Serine palmitoleoylation of WNT proteins is required for efficient binding to frizzled receptors.</text>
</comment>
<comment type="catalytic activity">
    <reaction evidence="1">
        <text>[Wnt protein]-O-(9Z)-hexadecenoyl-L-serine + H2O = [Wnt protein]-L-serine + (9Z)-hexadecenoate + H(+)</text>
        <dbReference type="Rhea" id="RHEA:45340"/>
        <dbReference type="Rhea" id="RHEA-COMP:11170"/>
        <dbReference type="Rhea" id="RHEA-COMP:11171"/>
        <dbReference type="ChEBI" id="CHEBI:15377"/>
        <dbReference type="ChEBI" id="CHEBI:15378"/>
        <dbReference type="ChEBI" id="CHEBI:29999"/>
        <dbReference type="ChEBI" id="CHEBI:32372"/>
        <dbReference type="ChEBI" id="CHEBI:85189"/>
        <dbReference type="EC" id="3.1.1.98"/>
    </reaction>
</comment>
<comment type="subcellular location">
    <subcellularLocation>
        <location evidence="2">Secreted</location>
    </subcellularLocation>
</comment>
<comment type="alternative products">
    <event type="alternative splicing"/>
    <isoform>
        <id>Q8R116-1</id>
        <name>1</name>
        <sequence type="displayed"/>
    </isoform>
    <isoform>
        <id>Q8R116-2</id>
        <name>2</name>
        <sequence type="described" ref="VSP_031295 VSP_031296"/>
    </isoform>
</comment>
<comment type="tissue specificity">
    <text evidence="5">Widely expressed. Expressed in lung, ovary, kidney, liver and brain. Not detected in thymus, heart, spleen, stomach, skeletal muscle and bone marrow.</text>
</comment>
<comment type="similarity">
    <text evidence="8">Belongs to the pectinacetylesterase family. Notum subfamily.</text>
</comment>
<comment type="caution">
    <text evidence="5 8">The molecular function of NOTUM has remained unclear for many years. It was initially thought to hydrolyze glycosaminoglycan (GAG) chains of glypicans, thereby affecting glypicans ability to interact with Wnt ligands. It was later reported to trigger glypican shedding, by mediating cleavage of their GPI-anchor (PubMed:17967162). However, while NOTUM specifically inhibit the Wnt signaling pathway, more pleiotropic effects would be expected from an enzyme affecting glypicans. It was finally shown that it requires glypicans to suppress Wnt signaling, but does not cleave their GPI-anchor. It acts by mediating depalmitoleoylation of WNT proteins, impairing WNT binding to frizzled receptors.</text>
</comment>
<name>NOTUM_MOUSE</name>